<accession>Q9SLH3</accession>
<accession>O23642</accession>
<accession>O23725</accession>
<accession>Q941D4</accession>
<organism>
    <name type="scientific">Arabidopsis thaliana</name>
    <name type="common">Mouse-ear cress</name>
    <dbReference type="NCBI Taxonomy" id="3702"/>
    <lineage>
        <taxon>Eukaryota</taxon>
        <taxon>Viridiplantae</taxon>
        <taxon>Streptophyta</taxon>
        <taxon>Embryophyta</taxon>
        <taxon>Tracheophyta</taxon>
        <taxon>Spermatophyta</taxon>
        <taxon>Magnoliopsida</taxon>
        <taxon>eudicotyledons</taxon>
        <taxon>Gunneridae</taxon>
        <taxon>Pentapetalae</taxon>
        <taxon>rosids</taxon>
        <taxon>malvids</taxon>
        <taxon>Brassicales</taxon>
        <taxon>Brassicaceae</taxon>
        <taxon>Camelineae</taxon>
        <taxon>Arabidopsis</taxon>
    </lineage>
</organism>
<evidence type="ECO:0000255" key="1">
    <source>
        <dbReference type="PROSITE-ProRule" id="PRU01191"/>
    </source>
</evidence>
<evidence type="ECO:0000256" key="2">
    <source>
        <dbReference type="SAM" id="MobiDB-lite"/>
    </source>
</evidence>
<evidence type="ECO:0000269" key="3">
    <source>
    </source>
</evidence>
<evidence type="ECO:0000269" key="4">
    <source>
    </source>
</evidence>
<evidence type="ECO:0000269" key="5">
    <source>
    </source>
</evidence>
<evidence type="ECO:0000269" key="6">
    <source>
    </source>
</evidence>
<evidence type="ECO:0000269" key="7">
    <source>
    </source>
</evidence>
<evidence type="ECO:0000269" key="8">
    <source>
    </source>
</evidence>
<evidence type="ECO:0000269" key="9">
    <source>
    </source>
</evidence>
<evidence type="ECO:0000269" key="10">
    <source>
    </source>
</evidence>
<evidence type="ECO:0000269" key="11">
    <source>
    </source>
</evidence>
<evidence type="ECO:0000269" key="12">
    <source>
    </source>
</evidence>
<evidence type="ECO:0000269" key="13">
    <source>
    </source>
</evidence>
<evidence type="ECO:0000269" key="14">
    <source>
    </source>
</evidence>
<evidence type="ECO:0000269" key="15">
    <source>
    </source>
</evidence>
<evidence type="ECO:0000269" key="16">
    <source>
    </source>
</evidence>
<evidence type="ECO:0000269" key="17">
    <source>
    </source>
</evidence>
<evidence type="ECO:0000269" key="18">
    <source>
    </source>
</evidence>
<evidence type="ECO:0000269" key="19">
    <source>
    </source>
</evidence>
<evidence type="ECO:0000269" key="20">
    <source>
    </source>
</evidence>
<evidence type="ECO:0000269" key="21">
    <source>
    </source>
</evidence>
<evidence type="ECO:0000269" key="22">
    <source>
    </source>
</evidence>
<evidence type="ECO:0000269" key="23">
    <source>
    </source>
</evidence>
<evidence type="ECO:0000269" key="24">
    <source>
    </source>
</evidence>
<evidence type="ECO:0000269" key="25">
    <source>
    </source>
</evidence>
<evidence type="ECO:0000269" key="26">
    <source>
    </source>
</evidence>
<evidence type="ECO:0000269" key="27">
    <source>
    </source>
</evidence>
<evidence type="ECO:0000269" key="28">
    <source>
    </source>
</evidence>
<evidence type="ECO:0000269" key="29">
    <source>
    </source>
</evidence>
<evidence type="ECO:0000269" key="30">
    <source ref="31"/>
</evidence>
<evidence type="ECO:0000303" key="31">
    <source>
    </source>
</evidence>
<evidence type="ECO:0000303" key="32">
    <source>
    </source>
</evidence>
<evidence type="ECO:0000303" key="33">
    <source>
    </source>
</evidence>
<evidence type="ECO:0000305" key="34"/>
<evidence type="ECO:0000312" key="35">
    <source>
        <dbReference type="Araport" id="AT2G01570"/>
    </source>
</evidence>
<evidence type="ECO:0000312" key="36">
    <source>
        <dbReference type="EMBL" id="AAC67333.1"/>
    </source>
</evidence>
<feature type="chain" id="PRO_0000132234" description="DELLA protein RGA">
    <location>
        <begin position="1"/>
        <end position="587"/>
    </location>
</feature>
<feature type="domain" description="GRAS" evidence="1">
    <location>
        <begin position="212"/>
        <end position="581"/>
    </location>
</feature>
<feature type="region of interest" description="Disordered" evidence="2">
    <location>
        <begin position="1"/>
        <end position="26"/>
    </location>
</feature>
<feature type="region of interest" description="Disordered" evidence="2">
    <location>
        <begin position="152"/>
        <end position="181"/>
    </location>
</feature>
<feature type="region of interest" description="Leucine repeat I (LRI)" evidence="1">
    <location>
        <begin position="219"/>
        <end position="273"/>
    </location>
</feature>
<feature type="region of interest" description="VHIID" evidence="1">
    <location>
        <begin position="292"/>
        <end position="357"/>
    </location>
</feature>
<feature type="region of interest" description="Leucine repeat II (LRII)" evidence="1">
    <location>
        <begin position="371"/>
        <end position="403"/>
    </location>
</feature>
<feature type="region of interest" description="PFYRE" evidence="1">
    <location>
        <begin position="415"/>
        <end position="502"/>
    </location>
</feature>
<feature type="region of interest" description="SAW" evidence="1">
    <location>
        <begin position="505"/>
        <end position="581"/>
    </location>
</feature>
<feature type="short sequence motif" description="DELLA motif">
    <location>
        <begin position="44"/>
        <end position="48"/>
    </location>
</feature>
<feature type="short sequence motif" description="LEXLE motif">
    <location>
        <begin position="66"/>
        <end position="70"/>
    </location>
</feature>
<feature type="short sequence motif" description="VHYNP motif">
    <location>
        <begin position="89"/>
        <end position="93"/>
    </location>
</feature>
<feature type="short sequence motif" description="VHIID" evidence="1">
    <location>
        <begin position="323"/>
        <end position="327"/>
    </location>
</feature>
<feature type="short sequence motif" description="LXXLL motif" evidence="1">
    <location>
        <begin position="423"/>
        <end position="427"/>
    </location>
</feature>
<feature type="compositionally biased region" description="Polar residues" evidence="2">
    <location>
        <begin position="153"/>
        <end position="175"/>
    </location>
</feature>
<feature type="mutagenesis site" description="In rga-delta17; induces resistance to GA-induced degradation but does not affect nuclear localization." evidence="5">
    <location>
        <begin position="44"/>
        <end position="60"/>
    </location>
</feature>
<feature type="mutagenesis site" description="Causes a semidwarf phenotype by abolishing the interaction with GID2 leading to prevent its degradation." evidence="14">
    <original>Q</original>
    <variation>R</variation>
    <location>
        <position position="341"/>
    </location>
</feature>
<feature type="mutagenesis site" description="In rga-2; partially suppresses phenotypic defects of GA-mutant ga1-3." evidence="29">
    <original>D</original>
    <variation>N</variation>
    <location>
        <position position="478"/>
    </location>
</feature>
<feature type="sequence conflict" description="In Ref. 2; CAA75493." evidence="34" ref="2">
    <original>T</original>
    <variation>A</variation>
    <location>
        <position position="86"/>
    </location>
</feature>
<feature type="sequence conflict" description="In Ref. 2; CAA75493." evidence="34" ref="2">
    <original>K</original>
    <variation>E</variation>
    <location>
        <position position="139"/>
    </location>
</feature>
<feature type="sequence conflict" description="In Ref. 1; CAA72177 and 2; CAA75493." evidence="34" ref="1 2">
    <original>G</original>
    <variation>A</variation>
    <location>
        <position position="203"/>
    </location>
</feature>
<feature type="sequence conflict" description="In Ref. 5; AAK97709." evidence="34" ref="5">
    <original>V</original>
    <variation>D</variation>
    <location>
        <position position="209"/>
    </location>
</feature>
<feature type="sequence conflict" description="In Ref. 2; CAA75493." evidence="34" ref="2">
    <original>I</original>
    <variation>V</variation>
    <location>
        <position position="383"/>
    </location>
</feature>
<feature type="sequence conflict" description="In Ref. 1; CAA72177." evidence="34" ref="1">
    <original>Y</original>
    <variation>H</variation>
    <location>
        <position position="587"/>
    </location>
</feature>
<comment type="function">
    <text evidence="3 4 7 8 9 10 15 17 18 22 29">Probable transcriptional regulator that acts as a repressor of the gibberellin (GA) signaling pathway. Probably acts by participating in large multiprotein complexes that repress transcription of GA-inducible genes. Positively regulates XERICO expression in seeds. Upon GA application, it is degraded by the proteasome, allowing the GA signaling pathway. Compared to other DELLA proteins, it is the most sensitive to GA application. No effect of the BOI proteins on its stability. Its activity is probably regulated by other phytohormones such as auxin and ethylene, attenuation of auxin transport delaying its GA-induced degradation. Involved in the regulation of seed dormancy and germination, including glucose-induced delay of seed germination (PubMed:24989044).</text>
</comment>
<comment type="subunit">
    <text evidence="11 12 13 16 18 19 20 21 22 23 24 25 30">Interacts directly with the GID2/SLY1 component of the SCF(GID2) complex. Interacts (via N-terminus) with GID1A, GID1B and GID1B (via N-terminus). Binds to bHLH transcription factors such as MYC2, PIF1, PIF4, PIF6 and SPT. Interacts with the BOI proteins BOI, BRG1, BRG2 and BRG3. Interacts with NFYC9 (PubMed:25105952). Interacts with TOPP4 (PubMed:25010794). Interacts with FLZ5 (Ref.31). Binds to zinc finger proteins MGP/IDD3, IDD4, IDD5, BIB/IDD9 and JKD/IDD10 in the nucleus (PubMed:24821766). Binds to and coactivates GAF1/IDD2 and ENY/IDD1 (PubMed:25035403). Binds to PDF2 and ATML1 (PubMed:24989044).</text>
</comment>
<comment type="interaction">
    <interactant intactId="EBI-963624">
        <id>Q9SLH3</id>
    </interactant>
    <interactant intactId="EBI-1101028">
        <id>Q9ZWJ9</id>
        <label>ARR2</label>
    </interactant>
    <organismsDiffer>false</organismsDiffer>
    <experiments>5</experiments>
</comment>
<comment type="interaction">
    <interactant intactId="EBI-963624">
        <id>Q9SLH3</id>
    </interactant>
    <interactant intactId="EBI-25528007">
        <id>A0A178VU28</id>
        <label>At2g46735</label>
    </interactant>
    <organismsDiffer>false</organismsDiffer>
    <experiments>3</experiments>
</comment>
<comment type="interaction">
    <interactant intactId="EBI-963624">
        <id>Q9SLH3</id>
    </interactant>
    <interactant intactId="EBI-3387100">
        <id>Q9FMT4</id>
        <label>At5g14170</label>
    </interactant>
    <organismsDiffer>false</organismsDiffer>
    <experiments>3</experiments>
</comment>
<comment type="interaction">
    <interactant intactId="EBI-963624">
        <id>Q9SLH3</id>
    </interactant>
    <interactant intactId="EBI-1153783">
        <id>Q38897</id>
        <label>BEL1</label>
    </interactant>
    <organismsDiffer>false</organismsDiffer>
    <experiments>3</experiments>
</comment>
<comment type="interaction">
    <interactant intactId="EBI-963624">
        <id>Q9SLH3</id>
    </interactant>
    <interactant intactId="EBI-1153895">
        <id>Q9FXG8</id>
        <label>BLH10</label>
    </interactant>
    <organismsDiffer>false</organismsDiffer>
    <experiments>3</experiments>
</comment>
<comment type="interaction">
    <interactant intactId="EBI-963624">
        <id>Q9SLH3</id>
    </interactant>
    <interactant intactId="EBI-1153797">
        <id>Q94KL5</id>
        <label>BLH4</label>
    </interactant>
    <organismsDiffer>false</organismsDiffer>
    <experiments>3</experiments>
</comment>
<comment type="interaction">
    <interactant intactId="EBI-963624">
        <id>Q9SLH3</id>
    </interactant>
    <interactant intactId="EBI-1803261">
        <id>Q8S307</id>
        <label>BZR1</label>
    </interactant>
    <organismsDiffer>false</organismsDiffer>
    <experiments>8</experiments>
</comment>
<comment type="interaction">
    <interactant intactId="EBI-963624">
        <id>Q9SLH3</id>
    </interactant>
    <interactant intactId="EBI-1639724">
        <id>Q39057</id>
        <label>CO</label>
    </interactant>
    <organismsDiffer>false</organismsDiffer>
    <experiments>3</experiments>
</comment>
<comment type="interaction">
    <interactant intactId="EBI-963624">
        <id>Q9SLH3</id>
    </interactant>
    <interactant intactId="EBI-963597">
        <id>Q9MAA7</id>
        <label>GID1A</label>
    </interactant>
    <organismsDiffer>false</organismsDiffer>
    <experiments>13</experiments>
</comment>
<comment type="interaction">
    <interactant intactId="EBI-963624">
        <id>Q9SLH3</id>
    </interactant>
    <interactant intactId="EBI-963686">
        <id>Q9LYC1</id>
        <label>GID1B</label>
    </interactant>
    <organismsDiffer>false</organismsDiffer>
    <experiments>13</experiments>
</comment>
<comment type="interaction">
    <interactant intactId="EBI-963624">
        <id>Q9SLH3</id>
    </interactant>
    <interactant intactId="EBI-963794">
        <id>Q940G6</id>
        <label>GID1C</label>
    </interactant>
    <organismsDiffer>false</organismsDiffer>
    <experiments>11</experiments>
</comment>
<comment type="interaction">
    <interactant intactId="EBI-963624">
        <id>Q9SLH3</id>
    </interactant>
    <interactant intactId="EBI-619033">
        <id>Q9STX3</id>
        <label>GID2</label>
    </interactant>
    <organismsDiffer>false</organismsDiffer>
    <experiments>4</experiments>
</comment>
<comment type="interaction">
    <interactant intactId="EBI-963624">
        <id>Q9SLH3</id>
    </interactant>
    <interactant intactId="EBI-1536720">
        <id>Q9SND4</id>
        <label>HEC2</label>
    </interactant>
    <organismsDiffer>false</organismsDiffer>
    <experiments>4</experiments>
</comment>
<comment type="interaction">
    <interactant intactId="EBI-963624">
        <id>Q9SLH3</id>
    </interactant>
    <interactant intactId="EBI-25522816">
        <id>Q9SB60</id>
        <label>IPT4</label>
    </interactant>
    <organismsDiffer>false</organismsDiffer>
    <experiments>3</experiments>
</comment>
<comment type="interaction">
    <interactant intactId="EBI-963624">
        <id>Q9SLH3</id>
    </interactant>
    <interactant intactId="EBI-4426504">
        <id>Q93WJ9</id>
        <label>KAN1</label>
    </interactant>
    <organismsDiffer>false</organismsDiffer>
    <experiments>3</experiments>
</comment>
<comment type="interaction">
    <interactant intactId="EBI-963624">
        <id>Q9SLH3</id>
    </interactant>
    <interactant intactId="EBI-15211238">
        <id>Q9FFJ9</id>
        <label>MJJ3.20</label>
    </interactant>
    <organismsDiffer>false</organismsDiffer>
    <experiments>3</experiments>
</comment>
<comment type="interaction">
    <interactant intactId="EBI-963624">
        <id>Q9SLH3</id>
    </interactant>
    <interactant intactId="EBI-1238534">
        <id>Q9C5C0</id>
        <label>MPK18</label>
    </interactant>
    <organismsDiffer>false</organismsDiffer>
    <experiments>4</experiments>
</comment>
<comment type="interaction">
    <interactant intactId="EBI-963624">
        <id>Q9SLH3</id>
    </interactant>
    <interactant intactId="EBI-25512843">
        <id>Q9LUC3</id>
        <label>MPK19</label>
    </interactant>
    <organismsDiffer>false</organismsDiffer>
    <experiments>3</experiments>
</comment>
<comment type="interaction">
    <interactant intactId="EBI-963624">
        <id>Q9SLH3</id>
    </interactant>
    <interactant intactId="EBI-2358896">
        <id>Q9SJG9</id>
        <label>MPK20</label>
    </interactant>
    <organismsDiffer>false</organismsDiffer>
    <experiments>5</experiments>
</comment>
<comment type="interaction">
    <interactant intactId="EBI-963624">
        <id>Q9SLH3</id>
    </interactant>
    <interactant intactId="EBI-625701">
        <id>O80536</id>
        <label>PIF3</label>
    </interactant>
    <organismsDiffer>false</organismsDiffer>
    <experiments>6</experiments>
</comment>
<comment type="interaction">
    <interactant intactId="EBI-963624">
        <id>Q9SLH3</id>
    </interactant>
    <interactant intactId="EBI-625716">
        <id>Q8W2F3</id>
        <label>PIF4</label>
    </interactant>
    <organismsDiffer>false</organismsDiffer>
    <experiments>4</experiments>
</comment>
<comment type="interaction">
    <interactant intactId="EBI-963624">
        <id>Q9SLH3</id>
    </interactant>
    <interactant intactId="EBI-1238460">
        <id>Q9FHZ1</id>
        <label>SCL23</label>
    </interactant>
    <organismsDiffer>false</organismsDiffer>
    <experiments>3</experiments>
</comment>
<comment type="interaction">
    <interactant intactId="EBI-963624">
        <id>Q9SLH3</id>
    </interactant>
    <interactant intactId="EBI-4429250">
        <id>Q9LPR8</id>
        <label>SCL3</label>
    </interactant>
    <organismsDiffer>false</organismsDiffer>
    <experiments>3</experiments>
</comment>
<comment type="interaction">
    <interactant intactId="EBI-963624">
        <id>Q9SLH3</id>
    </interactant>
    <interactant intactId="EBI-4424877">
        <id>Q9S7W5</id>
        <label>TCP13</label>
    </interactant>
    <organismsDiffer>false</organismsDiffer>
    <experiments>3</experiments>
</comment>
<comment type="interaction">
    <interactant intactId="EBI-963624">
        <id>Q9SLH3</id>
    </interactant>
    <interactant intactId="EBI-4424563">
        <id>Q93Z00</id>
        <label>TCP14</label>
    </interactant>
    <organismsDiffer>false</organismsDiffer>
    <experiments>3</experiments>
</comment>
<comment type="interaction">
    <interactant intactId="EBI-963624">
        <id>Q9SLH3</id>
    </interactant>
    <interactant intactId="EBI-25522447">
        <id>Q9MAH8</id>
        <label>TCP3</label>
    </interactant>
    <organismsDiffer>false</organismsDiffer>
    <experiments>3</experiments>
</comment>
<comment type="interaction">
    <interactant intactId="EBI-963624">
        <id>Q9SLH3</id>
    </interactant>
    <interactant intactId="EBI-1792583">
        <id>Q8W4J8</id>
        <label>TIFY7</label>
    </interactant>
    <organismsDiffer>false</organismsDiffer>
    <experiments>4</experiments>
</comment>
<comment type="interaction">
    <interactant intactId="EBI-963624">
        <id>Q9SLH3</id>
    </interactant>
    <interactant intactId="EBI-1239118">
        <id>O04336</id>
        <label>WRKY21</label>
    </interactant>
    <organismsDiffer>false</organismsDiffer>
    <experiments>3</experiments>
</comment>
<comment type="subcellular location">
    <subcellularLocation>
        <location evidence="18 21 27 29">Nucleus</location>
    </subcellularLocation>
    <text evidence="27">Accumulates in the nucleus in response to cold.</text>
</comment>
<comment type="tissue specificity">
    <text evidence="6 18 28 29">Ubiquitously expressed. Expressed in roots, rosette leaves, bolting and mature stems, young and mature siliques, flower buds and influorescences.</text>
</comment>
<comment type="induction">
    <text evidence="22">Upon seed imbibition, increased GA levels in the epidermis reduce DELLA proteins (e.g. GAI/RGA2, RGA/RGA1/GRS and RGL2/SCL19) abundance and release, in turn, ATML1 and PDF2 which activate LIP1 expression, thus enhancing germination potential.</text>
</comment>
<comment type="domain">
    <text evidence="5">The DELLA motif is required for its GA-induced degradation but not for the interaction with GID2.</text>
</comment>
<comment type="PTM">
    <text evidence="12">Phosphorylated. Phosphorylation may increase the interaction with GID2.</text>
</comment>
<comment type="PTM">
    <text evidence="23">Gibberellin (GA) induces dephosphorylation of RGA by TOPP4 and subsequent degradation by the proteasomal pathway.</text>
</comment>
<comment type="PTM">
    <text>Ubiquitinated. Upon GA application it is ubiquitinated by the SCF(GID2) complex, leading to its subsequent degradation.</text>
</comment>
<comment type="PTM">
    <text evidence="26">O-fucosylated by SPY (PubMed:28244988). O-fucosylation enhances RGA activity by promoting RGA binding to key transcription factors in brassinosteroid and light signaling pathways (PubMed:28244988).</text>
</comment>
<comment type="disruption phenotype">
    <text evidence="20">Rga, gai, rgl1, rgl2 and rgl3 pentuple mutant displays constitutive GA responses even in the absence of GA treatment.</text>
</comment>
<comment type="similarity">
    <text evidence="34">Belongs to the GRAS family. DELLA subfamily.</text>
</comment>
<sequence length="587" mass="64035">MKRDHHQFQGRLSNHGTSSSSSSISKDKMMMVKKEEDGGGNMDDELLAVLGYKVRSSEMAEVALKLEQLETMMSNVQEDGLSHLATDTVHYNPSELYSWLDNMLSELNPPPLPASSNGLDPVLPSPEICGFPASDYDLKVIPGNAIYQFPAIDSSSSSNNQNKRLKSCSSPDSMVTSTSTGTQIGGVIGTTVTTTTTTTTAAGESTRSVILVDSQENGVRLVHALMACAEAIQQNNLTLAEALVKQIGCLAVSQAGAMRKVATYFAEALARRIYRLSPPQNQIDHCLSDTLQMHFYETCPYLKFAHFTANQAILEAFEGKKRVHVIDFSMNQGLQWPALMQALALREGGPPTFRLTGIGPPAPDNSDHLHEVGCKLAQLAEAIHVEFEYRGFVANSLADLDASMLELRPSDTEAVAVNSVFELHKLLGRPGGIEKVLGVVKQIKPVIFTVVEQESNHNGPVFLDRFTESLHYYSTLFDSLEGVPNSQDKVMSEVYLGKQICNLVACEGPDRVERHETLSQWGNRFGSSGLAPAHLGSNAFKQASMLLSVFNSGQGYRVEESNGCLMLGWHTRPLITTSAWKLSTAAY</sequence>
<dbReference type="EMBL" id="Y11336">
    <property type="protein sequence ID" value="CAA72177.1"/>
    <property type="molecule type" value="mRNA"/>
</dbReference>
<dbReference type="EMBL" id="Y15194">
    <property type="protein sequence ID" value="CAA75493.1"/>
    <property type="molecule type" value="mRNA"/>
</dbReference>
<dbReference type="EMBL" id="AC005560">
    <property type="protein sequence ID" value="AAC67333.1"/>
    <property type="molecule type" value="Genomic_DNA"/>
</dbReference>
<dbReference type="EMBL" id="CP002685">
    <property type="protein sequence ID" value="AEC05469.1"/>
    <property type="molecule type" value="Genomic_DNA"/>
</dbReference>
<dbReference type="EMBL" id="AY052239">
    <property type="protein sequence ID" value="AAK97709.1"/>
    <property type="molecule type" value="mRNA"/>
</dbReference>
<dbReference type="EMBL" id="AY054160">
    <property type="protein sequence ID" value="AAL06821.1"/>
    <property type="molecule type" value="mRNA"/>
</dbReference>
<dbReference type="EMBL" id="BT010467">
    <property type="protein sequence ID" value="AAQ65090.1"/>
    <property type="molecule type" value="mRNA"/>
</dbReference>
<dbReference type="PIR" id="D84426">
    <property type="entry name" value="D84426"/>
</dbReference>
<dbReference type="RefSeq" id="NP_178266.1">
    <property type="nucleotide sequence ID" value="NM_126218.3"/>
</dbReference>
<dbReference type="SMR" id="Q9SLH3"/>
<dbReference type="BioGRID" id="89">
    <property type="interactions" value="84"/>
</dbReference>
<dbReference type="DIP" id="DIP-32983N"/>
<dbReference type="FunCoup" id="Q9SLH3">
    <property type="interactions" value="1289"/>
</dbReference>
<dbReference type="IntAct" id="Q9SLH3">
    <property type="interactions" value="53"/>
</dbReference>
<dbReference type="MINT" id="Q9SLH3"/>
<dbReference type="STRING" id="3702.Q9SLH3"/>
<dbReference type="GlyGen" id="Q9SLH3">
    <property type="glycosylation" value="16 sites, 1 O-linked glycan (16 sites)"/>
</dbReference>
<dbReference type="iPTMnet" id="Q9SLH3"/>
<dbReference type="PaxDb" id="3702-AT2G01570.1"/>
<dbReference type="ProteomicsDB" id="236232"/>
<dbReference type="EnsemblPlants" id="AT2G01570.1">
    <property type="protein sequence ID" value="AT2G01570.1"/>
    <property type="gene ID" value="AT2G01570"/>
</dbReference>
<dbReference type="GeneID" id="814686"/>
<dbReference type="Gramene" id="AT2G01570.1">
    <property type="protein sequence ID" value="AT2G01570.1"/>
    <property type="gene ID" value="AT2G01570"/>
</dbReference>
<dbReference type="KEGG" id="ath:AT2G01570"/>
<dbReference type="Araport" id="AT2G01570"/>
<dbReference type="TAIR" id="AT2G01570">
    <property type="gene designation" value="RGA1"/>
</dbReference>
<dbReference type="eggNOG" id="ENOG502QPMG">
    <property type="taxonomic scope" value="Eukaryota"/>
</dbReference>
<dbReference type="HOGENOM" id="CLU_011924_4_0_1"/>
<dbReference type="InParanoid" id="Q9SLH3"/>
<dbReference type="OMA" id="PQNQIDH"/>
<dbReference type="PhylomeDB" id="Q9SLH3"/>
<dbReference type="PRO" id="PR:Q9SLH3"/>
<dbReference type="Proteomes" id="UP000006548">
    <property type="component" value="Chromosome 2"/>
</dbReference>
<dbReference type="ExpressionAtlas" id="Q9SLH3">
    <property type="expression patterns" value="baseline and differential"/>
</dbReference>
<dbReference type="GO" id="GO:0005634">
    <property type="term" value="C:nucleus"/>
    <property type="evidence" value="ECO:0000314"/>
    <property type="project" value="UniProtKB"/>
</dbReference>
<dbReference type="GO" id="GO:0003700">
    <property type="term" value="F:DNA-binding transcription factor activity"/>
    <property type="evidence" value="ECO:0000314"/>
    <property type="project" value="TAIR"/>
</dbReference>
<dbReference type="GO" id="GO:1990841">
    <property type="term" value="F:promoter-specific chromatin binding"/>
    <property type="evidence" value="ECO:0000314"/>
    <property type="project" value="TAIR"/>
</dbReference>
<dbReference type="GO" id="GO:0000976">
    <property type="term" value="F:transcription cis-regulatory region binding"/>
    <property type="evidence" value="ECO:0000353"/>
    <property type="project" value="TAIR"/>
</dbReference>
<dbReference type="GO" id="GO:0009740">
    <property type="term" value="P:gibberellic acid mediated signaling pathway"/>
    <property type="evidence" value="ECO:0000304"/>
    <property type="project" value="TAIR"/>
</dbReference>
<dbReference type="GO" id="GO:0033206">
    <property type="term" value="P:meiotic cytokinesis"/>
    <property type="evidence" value="ECO:0000315"/>
    <property type="project" value="TAIR"/>
</dbReference>
<dbReference type="GO" id="GO:1905614">
    <property type="term" value="P:negative regulation of developmental vegetative growth"/>
    <property type="evidence" value="ECO:0000316"/>
    <property type="project" value="CAFA"/>
</dbReference>
<dbReference type="GO" id="GO:0009938">
    <property type="term" value="P:negative regulation of gibberellic acid mediated signaling pathway"/>
    <property type="evidence" value="ECO:0000316"/>
    <property type="project" value="CAFA"/>
</dbReference>
<dbReference type="GO" id="GO:1905622">
    <property type="term" value="P:negative regulation of leaf development"/>
    <property type="evidence" value="ECO:0000315"/>
    <property type="project" value="CAFA"/>
</dbReference>
<dbReference type="GO" id="GO:1900033">
    <property type="term" value="P:negative regulation of trichome patterning"/>
    <property type="evidence" value="ECO:0000315"/>
    <property type="project" value="CAFA"/>
</dbReference>
<dbReference type="GO" id="GO:0045893">
    <property type="term" value="P:positive regulation of DNA-templated transcription"/>
    <property type="evidence" value="ECO:0000314"/>
    <property type="project" value="UniProtKB"/>
</dbReference>
<dbReference type="GO" id="GO:0010628">
    <property type="term" value="P:positive regulation of gene expression"/>
    <property type="evidence" value="ECO:0000315"/>
    <property type="project" value="CAFA"/>
</dbReference>
<dbReference type="GO" id="GO:0006355">
    <property type="term" value="P:regulation of DNA-templated transcription"/>
    <property type="evidence" value="ECO:0000304"/>
    <property type="project" value="TAIR"/>
</dbReference>
<dbReference type="GO" id="GO:0042176">
    <property type="term" value="P:regulation of protein catabolic process"/>
    <property type="evidence" value="ECO:0000315"/>
    <property type="project" value="TAIR"/>
</dbReference>
<dbReference type="GO" id="GO:2000033">
    <property type="term" value="P:regulation of seed dormancy process"/>
    <property type="evidence" value="ECO:0000270"/>
    <property type="project" value="UniProtKB"/>
</dbReference>
<dbReference type="GO" id="GO:0010029">
    <property type="term" value="P:regulation of seed germination"/>
    <property type="evidence" value="ECO:0000270"/>
    <property type="project" value="UniProtKB"/>
</dbReference>
<dbReference type="GO" id="GO:0009409">
    <property type="term" value="P:response to cold"/>
    <property type="evidence" value="ECO:0000314"/>
    <property type="project" value="UniProtKB"/>
</dbReference>
<dbReference type="GO" id="GO:0010218">
    <property type="term" value="P:response to far red light"/>
    <property type="evidence" value="ECO:0000270"/>
    <property type="project" value="TAIR"/>
</dbReference>
<dbReference type="GO" id="GO:0009739">
    <property type="term" value="P:response to gibberellin"/>
    <property type="evidence" value="ECO:0000315"/>
    <property type="project" value="CAFA"/>
</dbReference>
<dbReference type="FunFam" id="1.10.10.1290:FF:000001">
    <property type="entry name" value="DELLA protein GAI"/>
    <property type="match status" value="1"/>
</dbReference>
<dbReference type="Gene3D" id="1.10.10.1290">
    <property type="entry name" value="Transcriptional regulator DELLA, N-terminal domain"/>
    <property type="match status" value="1"/>
</dbReference>
<dbReference type="InterPro" id="IPR038088">
    <property type="entry name" value="DELLA_N_sf"/>
</dbReference>
<dbReference type="InterPro" id="IPR021914">
    <property type="entry name" value="TF_DELLA_N"/>
</dbReference>
<dbReference type="InterPro" id="IPR005202">
    <property type="entry name" value="TF_GRAS"/>
</dbReference>
<dbReference type="PANTHER" id="PTHR31636">
    <property type="entry name" value="OSJNBA0084A10.13 PROTEIN-RELATED"/>
    <property type="match status" value="1"/>
</dbReference>
<dbReference type="Pfam" id="PF12041">
    <property type="entry name" value="DELLA"/>
    <property type="match status" value="1"/>
</dbReference>
<dbReference type="Pfam" id="PF03514">
    <property type="entry name" value="GRAS"/>
    <property type="match status" value="1"/>
</dbReference>
<dbReference type="SMART" id="SM01129">
    <property type="entry name" value="DELLA"/>
    <property type="match status" value="1"/>
</dbReference>
<dbReference type="PROSITE" id="PS50985">
    <property type="entry name" value="GRAS"/>
    <property type="match status" value="1"/>
</dbReference>
<keyword id="KW-0217">Developmental protein</keyword>
<keyword id="KW-0939">Gibberellin signaling pathway</keyword>
<keyword id="KW-0539">Nucleus</keyword>
<keyword id="KW-0597">Phosphoprotein</keyword>
<keyword id="KW-1185">Reference proteome</keyword>
<keyword id="KW-0678">Repressor</keyword>
<keyword id="KW-0804">Transcription</keyword>
<keyword id="KW-0805">Transcription regulation</keyword>
<keyword id="KW-0832">Ubl conjugation</keyword>
<gene>
    <name evidence="33" type="primary">RGA</name>
    <name evidence="32" type="synonym">GRS</name>
    <name evidence="31" type="synonym">RGA1</name>
    <name evidence="35" type="ordered locus">At2g01570</name>
    <name evidence="36" type="ORF">F2I9.19</name>
</gene>
<protein>
    <recommendedName>
        <fullName evidence="33">DELLA protein RGA</fullName>
    </recommendedName>
    <alternativeName>
        <fullName evidence="32">GAI-related sequence</fullName>
    </alternativeName>
    <alternativeName>
        <fullName>GRAS family protein 10</fullName>
        <shortName>AtGRAS-10</shortName>
    </alternativeName>
    <alternativeName>
        <fullName evidence="32">Repressor on the ga1-3 mutant</fullName>
    </alternativeName>
    <alternativeName>
        <fullName evidence="31">Restoration of growth on ammonia protein 1</fullName>
    </alternativeName>
</protein>
<name>RGA_ARATH</name>
<proteinExistence type="evidence at protein level"/>
<reference key="1">
    <citation type="journal article" date="1997" name="FEBS Lett.">
        <title>Sequence and characterization of two Arabidopsis thaliana cDNAs isolated by functional complementation of a yeast gln3 gdh1 mutant.</title>
        <authorList>
            <person name="Truong H.-N."/>
            <person name="Caboche M."/>
            <person name="Daniel-Vedele F."/>
        </authorList>
    </citation>
    <scope>NUCLEOTIDE SEQUENCE [MRNA]</scope>
    <scope>TISSUE SPECIFICITY</scope>
    <source>
        <strain>cv. Columbia</strain>
    </source>
</reference>
<reference key="2">
    <citation type="journal article" date="1997" name="Genes Dev.">
        <title>The Arabidopsis GAI gene defines a signaling pathway that negatively regulates gibberellin responses.</title>
        <authorList>
            <person name="Peng J."/>
            <person name="Carol P."/>
            <person name="Richards D.E."/>
            <person name="King K.E."/>
            <person name="Cowling R.J."/>
            <person name="Murphy G.P."/>
            <person name="Harberd N.P."/>
        </authorList>
    </citation>
    <scope>NUCLEOTIDE SEQUENCE [MRNA]</scope>
    <source>
        <strain>cv. Landsberg erecta</strain>
    </source>
</reference>
<reference key="3">
    <citation type="journal article" date="1999" name="Nature">
        <title>Sequence and analysis of chromosome 2 of the plant Arabidopsis thaliana.</title>
        <authorList>
            <person name="Lin X."/>
            <person name="Kaul S."/>
            <person name="Rounsley S.D."/>
            <person name="Shea T.P."/>
            <person name="Benito M.-I."/>
            <person name="Town C.D."/>
            <person name="Fujii C.Y."/>
            <person name="Mason T.M."/>
            <person name="Bowman C.L."/>
            <person name="Barnstead M.E."/>
            <person name="Feldblyum T.V."/>
            <person name="Buell C.R."/>
            <person name="Ketchum K.A."/>
            <person name="Lee J.J."/>
            <person name="Ronning C.M."/>
            <person name="Koo H.L."/>
            <person name="Moffat K.S."/>
            <person name="Cronin L.A."/>
            <person name="Shen M."/>
            <person name="Pai G."/>
            <person name="Van Aken S."/>
            <person name="Umayam L."/>
            <person name="Tallon L.J."/>
            <person name="Gill J.E."/>
            <person name="Adams M.D."/>
            <person name="Carrera A.J."/>
            <person name="Creasy T.H."/>
            <person name="Goodman H.M."/>
            <person name="Somerville C.R."/>
            <person name="Copenhaver G.P."/>
            <person name="Preuss D."/>
            <person name="Nierman W.C."/>
            <person name="White O."/>
            <person name="Eisen J.A."/>
            <person name="Salzberg S.L."/>
            <person name="Fraser C.M."/>
            <person name="Venter J.C."/>
        </authorList>
    </citation>
    <scope>NUCLEOTIDE SEQUENCE [LARGE SCALE GENOMIC DNA]</scope>
    <source>
        <strain>cv. Columbia</strain>
    </source>
</reference>
<reference key="4">
    <citation type="journal article" date="2017" name="Plant J.">
        <title>Araport11: a complete reannotation of the Arabidopsis thaliana reference genome.</title>
        <authorList>
            <person name="Cheng C.Y."/>
            <person name="Krishnakumar V."/>
            <person name="Chan A.P."/>
            <person name="Thibaud-Nissen F."/>
            <person name="Schobel S."/>
            <person name="Town C.D."/>
        </authorList>
    </citation>
    <scope>GENOME REANNOTATION</scope>
    <source>
        <strain>cv. Columbia</strain>
    </source>
</reference>
<reference key="5">
    <citation type="journal article" date="2003" name="Science">
        <title>Empirical analysis of transcriptional activity in the Arabidopsis genome.</title>
        <authorList>
            <person name="Yamada K."/>
            <person name="Lim J."/>
            <person name="Dale J.M."/>
            <person name="Chen H."/>
            <person name="Shinn P."/>
            <person name="Palm C.J."/>
            <person name="Southwick A.M."/>
            <person name="Wu H.C."/>
            <person name="Kim C.J."/>
            <person name="Nguyen M."/>
            <person name="Pham P.K."/>
            <person name="Cheuk R.F."/>
            <person name="Karlin-Newmann G."/>
            <person name="Liu S.X."/>
            <person name="Lam B."/>
            <person name="Sakano H."/>
            <person name="Wu T."/>
            <person name="Yu G."/>
            <person name="Miranda M."/>
            <person name="Quach H.L."/>
            <person name="Tripp M."/>
            <person name="Chang C.H."/>
            <person name="Lee J.M."/>
            <person name="Toriumi M.J."/>
            <person name="Chan M.M."/>
            <person name="Tang C.C."/>
            <person name="Onodera C.S."/>
            <person name="Deng J.M."/>
            <person name="Akiyama K."/>
            <person name="Ansari Y."/>
            <person name="Arakawa T."/>
            <person name="Banh J."/>
            <person name="Banno F."/>
            <person name="Bowser L."/>
            <person name="Brooks S.Y."/>
            <person name="Carninci P."/>
            <person name="Chao Q."/>
            <person name="Choy N."/>
            <person name="Enju A."/>
            <person name="Goldsmith A.D."/>
            <person name="Gurjal M."/>
            <person name="Hansen N.F."/>
            <person name="Hayashizaki Y."/>
            <person name="Johnson-Hopson C."/>
            <person name="Hsuan V.W."/>
            <person name="Iida K."/>
            <person name="Karnes M."/>
            <person name="Khan S."/>
            <person name="Koesema E."/>
            <person name="Ishida J."/>
            <person name="Jiang P.X."/>
            <person name="Jones T."/>
            <person name="Kawai J."/>
            <person name="Kamiya A."/>
            <person name="Meyers C."/>
            <person name="Nakajima M."/>
            <person name="Narusaka M."/>
            <person name="Seki M."/>
            <person name="Sakurai T."/>
            <person name="Satou M."/>
            <person name="Tamse R."/>
            <person name="Vaysberg M."/>
            <person name="Wallender E.K."/>
            <person name="Wong C."/>
            <person name="Yamamura Y."/>
            <person name="Yuan S."/>
            <person name="Shinozaki K."/>
            <person name="Davis R.W."/>
            <person name="Theologis A."/>
            <person name="Ecker J.R."/>
        </authorList>
    </citation>
    <scope>NUCLEOTIDE SEQUENCE [LARGE SCALE MRNA]</scope>
    <source>
        <strain>cv. Columbia</strain>
    </source>
</reference>
<reference key="6">
    <citation type="journal article" date="1998" name="Plant Cell">
        <title>The Arabidopsis RGA gene encodes a transcriptional regulator repressing the gibberellin signal transduction pathway.</title>
        <authorList>
            <person name="Silverstone A.L."/>
            <person name="Ciampaglio C.N."/>
            <person name="Sun T.-P."/>
        </authorList>
    </citation>
    <scope>FUNCTION</scope>
    <scope>SUBCELLULAR LOCATION</scope>
    <scope>TISSUE SPECIFICITY</scope>
    <scope>MUTAGENESIS OF ASP-478</scope>
</reference>
<reference key="7">
    <citation type="journal article" date="2001" name="Genetics">
        <title>Gibberellins are not required for normal stem growth in Arabidopsis thaliana in the absence of GAI and RGA.</title>
        <authorList>
            <person name="King K.E."/>
            <person name="Moritz T."/>
            <person name="Harberd N.P."/>
        </authorList>
    </citation>
    <scope>FUNCTION</scope>
</reference>
<reference key="8">
    <citation type="journal article" date="2001" name="Genetics">
        <title>Synergistic derepression of gibberellin signaling by removing RGA and GAI function in Arabidopsis thaliana.</title>
        <authorList>
            <person name="Dill A."/>
            <person name="Sun T.-P."/>
        </authorList>
    </citation>
    <scope>FUNCTION</scope>
</reference>
<reference key="9">
    <citation type="journal article" date="2001" name="Proc. Natl. Acad. Sci. U.S.A.">
        <title>The DELLA motif is essential for gibberellin-induced degradation of RGA.</title>
        <authorList>
            <person name="Dill A."/>
            <person name="Jung H.-S."/>
            <person name="Sun T.-P."/>
        </authorList>
    </citation>
    <scope>DOMAIN</scope>
    <scope>MUTAGENESIS OF 44-ASP--ALA-60</scope>
</reference>
<reference key="10">
    <citation type="journal article" date="2002" name="Genes Dev.">
        <title>Gibberellin regulates Arabidopsis seed germination via RGL2, a GAI/RGA-like gene whose expression is up-regulated following imbibition.</title>
        <authorList>
            <person name="Lee S."/>
            <person name="Cheng H."/>
            <person name="King K.E."/>
            <person name="Wang W."/>
            <person name="He Y."/>
            <person name="Hussain A."/>
            <person name="Lo J."/>
            <person name="Harberd N.P."/>
            <person name="Peng J."/>
        </authorList>
    </citation>
    <scope>TISSUE SPECIFICITY</scope>
</reference>
<reference key="11">
    <citation type="journal article" date="2003" name="Nature">
        <title>Auxin promotes Arabidopsis root growth by modulating gibberellin response.</title>
        <authorList>
            <person name="Fu X."/>
            <person name="Harberd N.P."/>
        </authorList>
    </citation>
    <scope>FUNCTION</scope>
</reference>
<reference key="12">
    <citation type="journal article" date="2003" name="Plant Cell">
        <title>The Arabidopsis SLEEPY1 gene encodes a putative F-box subunit of an SCF E3 ubiquitin ligase.</title>
        <authorList>
            <person name="McGinnis K.M."/>
            <person name="Thomas S.G."/>
            <person name="Soule J.D."/>
            <person name="Strader L.C."/>
            <person name="Zale J.M."/>
            <person name="Sun T.-P."/>
            <person name="Steber C.M."/>
        </authorList>
    </citation>
    <scope>DEGRADATION</scope>
</reference>
<reference key="13">
    <citation type="journal article" date="2003" name="Plant Cell">
        <title>Ethylene regulates Arabidopsis development via the modulation of DELLA protein growth repressor function.</title>
        <authorList>
            <person name="Achard P."/>
            <person name="Vriezen W.H."/>
            <person name="Van Der Straeten D."/>
            <person name="Harberd N.P."/>
        </authorList>
    </citation>
    <scope>FUNCTION</scope>
</reference>
<reference key="14">
    <citation type="journal article" date="2004" name="Development">
        <title>Gibberellin regulates Arabidopsis floral development via suppression of DELLA protein function.</title>
        <authorList>
            <person name="Cheng H."/>
            <person name="Qin L."/>
            <person name="Lee S."/>
            <person name="Fu X."/>
            <person name="Richards D.E."/>
            <person name="Cao D."/>
            <person name="Luo D."/>
            <person name="Harberd N.P."/>
            <person name="Peng J."/>
        </authorList>
    </citation>
    <scope>FUNCTION</scope>
</reference>
<reference key="15">
    <citation type="journal article" date="2004" name="Plant Cell">
        <title>The Arabidopsis F-box protein SLEEPY1 targets gibberellin signaling repressors for gibberellin-induced degradation.</title>
        <authorList>
            <person name="Dill A."/>
            <person name="Thomas S.G."/>
            <person name="Hu J."/>
            <person name="Steber C.M."/>
            <person name="Sun T.-P."/>
        </authorList>
    </citation>
    <scope>PROBABLE UBIQUITINATION</scope>
    <scope>INTERACTION WITH GID2</scope>
</reference>
<reference key="16">
    <citation type="journal article" date="2004" name="Plant Cell">
        <title>The Arabidopsis mutant sleepy1gar2-1 protein promotes plant growth by increasing the affinity of the SCFSLY1 E3 ubiquitin ligase for DELLA protein substrates.</title>
        <authorList>
            <person name="Fu X."/>
            <person name="Richards D.E."/>
            <person name="Fleck B."/>
            <person name="Xie D."/>
            <person name="Burton N."/>
            <person name="Harberd N.P."/>
        </authorList>
    </citation>
    <scope>INTERACTION WITH GID2</scope>
    <scope>PHOSPHORYLATION</scope>
</reference>
<reference key="17">
    <citation type="journal article" date="2004" name="Plant Physiol.">
        <title>Della proteins and gibberellin-regulated seed germination and floral development in Arabidopsis.</title>
        <authorList>
            <person name="Tyler L."/>
            <person name="Thomas S.G."/>
            <person name="Hu J."/>
            <person name="Dill A."/>
            <person name="Alonso J.M."/>
            <person name="Ecker J.R."/>
            <person name="Sun T.-P."/>
        </authorList>
    </citation>
    <scope>INTERACTION WITH GID2</scope>
</reference>
<reference key="18">
    <citation type="journal article" date="2004" name="Proc. Natl. Acad. Sci. U.S.A.">
        <title>Floral homeotic genes are targets of gibberellin signaling in flower development.</title>
        <authorList>
            <person name="Yu H."/>
            <person name="Ito T."/>
            <person name="Zhao Y."/>
            <person name="Peng J."/>
            <person name="Kumar P."/>
            <person name="Meyerowitz E.M."/>
        </authorList>
    </citation>
    <scope>FUNCTION</scope>
</reference>
<reference key="19">
    <citation type="journal article" date="2005" name="Planta">
        <title>Loss of function of four DELLA genes leads to light- and gibberellin-independent seed germination in Arabidopsis.</title>
        <authorList>
            <person name="Cao D."/>
            <person name="Hussain A."/>
            <person name="Cheng H."/>
            <person name="Peng J."/>
        </authorList>
    </citation>
    <scope>FUNCTION</scope>
</reference>
<reference key="20">
    <citation type="journal article" date="2005" name="Plant Physiol.">
        <title>A novel dwarfing mutation in a green revolution gene from Brassica rapa.</title>
        <authorList>
            <person name="Muangprom A."/>
            <person name="Thomas S.-G."/>
            <person name="Sun T.-P."/>
            <person name="Osborn T.C."/>
        </authorList>
    </citation>
    <scope>MUTAGENESIS OF GLN-341</scope>
</reference>
<reference key="21">
    <citation type="journal article" date="2006" name="Plant J.">
        <title>Identification and characterization of Arabidopsis gibberellin receptors.</title>
        <authorList>
            <person name="Nakajima M."/>
            <person name="Shimada A."/>
            <person name="Takashi Y."/>
            <person name="Kim Y.C."/>
            <person name="Park S.H."/>
            <person name="Ueguchi-Tanaka M."/>
            <person name="Suzuki H."/>
            <person name="Katoh E."/>
            <person name="Iuchi S."/>
            <person name="Kobayashi M."/>
            <person name="Maeda T."/>
            <person name="Matsuoka M."/>
            <person name="Yamaguchi I."/>
        </authorList>
    </citation>
    <scope>INTERACTION WITH GID1A; GID1B AND GID1C</scope>
</reference>
<reference key="22">
    <citation type="journal article" date="2007" name="Plant Cell">
        <title>Global analysis of della direct targets in early gibberellin signaling in Arabidopsis.</title>
        <authorList>
            <person name="Zentella R."/>
            <person name="Zhang Z.L."/>
            <person name="Park M."/>
            <person name="Thomas S.G."/>
            <person name="Endo A."/>
            <person name="Murase K."/>
            <person name="Fleet C.M."/>
            <person name="Jikumaru Y."/>
            <person name="Nambara E."/>
            <person name="Kamiya Y."/>
            <person name="Sun T.P."/>
        </authorList>
    </citation>
    <scope>FUNCTION</scope>
</reference>
<reference key="23">
    <citation type="journal article" date="2010" name="Mol. Biol. Evol.">
        <title>Transcriptional diversification and functional conservation between DELLA proteins in Arabidopsis.</title>
        <authorList>
            <person name="Gallego-Bartolome J."/>
            <person name="Minguet E.G."/>
            <person name="Marin J.A."/>
            <person name="Prat S."/>
            <person name="Blazquez M.A."/>
            <person name="Alabadi D."/>
        </authorList>
    </citation>
    <scope>FUNCTION</scope>
    <scope>TISSUE SPECIFICITY</scope>
    <scope>SUBCELLULAR LOCATION</scope>
    <scope>INTERACTION WITH PIF1; PIF4; PIF6 AND SPT</scope>
    <source>
        <strain>cv. Landsberg erecta</strain>
    </source>
</reference>
<reference key="24">
    <citation type="journal article" date="2012" name="Plant Cell">
        <title>Arabidopsis MYC2 interacts with DELLA proteins in regulating sesquiterpene synthase gene expression.</title>
        <authorList>
            <person name="Hong G.J."/>
            <person name="Xue X.Y."/>
            <person name="Mao Y.B."/>
            <person name="Wang L.J."/>
            <person name="Chen X.Y."/>
        </authorList>
    </citation>
    <scope>INTERACTION WITH MYC2</scope>
</reference>
<reference key="25">
    <citation type="journal article" date="2013" name="Plant Cell">
        <title>DELLA proteins and their interacting RING Finger proteins repress gibberellin responses by binding to the promoters of a subset of gibberellin-responsive genes in Arabidopsis.</title>
        <authorList>
            <person name="Park J."/>
            <person name="Nguyen K.T."/>
            <person name="Park E."/>
            <person name="Jeon J.S."/>
            <person name="Choi G."/>
        </authorList>
    </citation>
    <scope>INTERACTION WITH BOI; BRG1; BRG2 AND BRG3</scope>
    <scope>DISRUPTION PHENOTYPE</scope>
</reference>
<reference key="26">
    <citation type="journal article" date="2014" name="Nat. Commun.">
        <title>Nuclear factor Y-mediated H3K27me3 demethylation of the SOC1 locus orchestrates flowering responses of Arabidopsis.</title>
        <authorList>
            <person name="Hou X."/>
            <person name="Zhou J."/>
            <person name="Liu C."/>
            <person name="Liu L."/>
            <person name="Shen L."/>
            <person name="Yu H."/>
        </authorList>
    </citation>
    <scope>INTERACTION WITH NFYC9</scope>
</reference>
<reference key="27">
    <citation type="journal article" date="2014" name="Plant Cell">
        <title>Arabidopsis DELLA and two HD-ZIP transcription factors regulate GA signaling in the epidermis through the L1 box cis-element.</title>
        <authorList>
            <person name="Rombola-Caldentey B."/>
            <person name="Rueda-Romero P."/>
            <person name="Iglesias-Fernandez R."/>
            <person name="Carbonero P."/>
            <person name="Onate-Sanchez L."/>
        </authorList>
    </citation>
    <scope>FUNCTION</scope>
    <scope>INDUCTION BY IMBIBITION</scope>
    <scope>INTERACTION WITH PDF2 AND ATML1</scope>
    <source>
        <strain>cv. Columbia</strain>
        <strain>cv. Landsberg erecta</strain>
    </source>
</reference>
<reference key="28">
    <citation type="journal article" date="2014" name="Plant Cell">
        <title>DELLAs function as coactivators of GAI-ASSOCIATED FACTOR1 in regulation of gibberellin homeostasis and signaling in Arabidopsis.</title>
        <authorList>
            <person name="Fukazawa J."/>
            <person name="Teramura H."/>
            <person name="Murakoshi S."/>
            <person name="Nasuno K."/>
            <person name="Nishida N."/>
            <person name="Ito T."/>
            <person name="Yoshida M."/>
            <person name="Kamiya Y."/>
            <person name="Yamaguchi S."/>
            <person name="Takahashi Y."/>
        </authorList>
    </citation>
    <scope>INTERACTION WITH GAF1/IDD2 AND ENY/IDD1</scope>
    <source>
        <strain>cv. Columbia</strain>
    </source>
</reference>
<reference key="29">
    <citation type="journal article" date="2014" name="PLoS Genet.">
        <title>Arabidopsis DELLA protein degradation is controlled by a type-one protein phosphatase, TOPP4.</title>
        <authorList>
            <person name="Qin Q."/>
            <person name="Wang W."/>
            <person name="Guo X."/>
            <person name="Yue J."/>
            <person name="Huang Y."/>
            <person name="Xu X."/>
            <person name="Li J."/>
            <person name="Hou S."/>
        </authorList>
    </citation>
    <scope>INTERACTION WITH TOPP4</scope>
    <scope>PHOSPHORYLATION</scope>
</reference>
<reference key="30">
    <citation type="journal article" date="2014" name="Proc. Natl. Acad. Sci. U.S.A.">
        <title>DELLA protein functions as a transcriptional activator through the DNA binding of the indeterminate domain family proteins.</title>
        <authorList>
            <person name="Yoshida H."/>
            <person name="Hirano K."/>
            <person name="Sato T."/>
            <person name="Mitsuda N."/>
            <person name="Nomoto M."/>
            <person name="Maeo K."/>
            <person name="Koketsu E."/>
            <person name="Mitani R."/>
            <person name="Kawamura M."/>
            <person name="Ishiguro S."/>
            <person name="Tada Y."/>
            <person name="Ohme-Takagi M."/>
            <person name="Matsuoka M."/>
            <person name="Ueguchi-Tanaka M."/>
        </authorList>
    </citation>
    <scope>INTERACTION WITH MGP/IDD3; IDD4; IDD5; BIB/IDD9 AND JKD/IDD10</scope>
    <scope>SUBCELLULAR LOCATION</scope>
</reference>
<reference key="31">
    <citation type="journal article" date="2016" name="Curr. Plant Biol.">
        <title>A protein-protein interaction network linking the energy-sensor kinase SnRK1 to multiple signaling pathways in Arabidopsis thaliana.</title>
        <authorList>
            <person name="Nietzsche M."/>
            <person name="Landgraf R."/>
            <person name="Tohge T."/>
            <person name="Boernke F."/>
        </authorList>
    </citation>
    <scope>INTERACTION WITH FLZ5</scope>
</reference>
<reference key="32">
    <citation type="journal article" date="2017" name="Mol. Plant">
        <title>Prefoldins negatively regulate cold acclimation in Arabidopsis thaliana by promoting nuclear proteasome-mediated HY5 degradation.</title>
        <authorList>
            <person name="Perea-Resa C."/>
            <person name="Rodriguez-Milla M.A."/>
            <person name="Iniesto E."/>
            <person name="Rubio V."/>
            <person name="Salinas J."/>
        </authorList>
    </citation>
    <scope>SUBCELLULAR LOCATION</scope>
    <source>
        <strain>cv. Columbia</strain>
    </source>
</reference>
<reference key="33">
    <citation type="journal article" date="2017" name="Nat. Chem. Biol.">
        <title>The Arabidopsis O-fucosyltransferase SPINDLY activates nuclear growth repressor DELLA.</title>
        <authorList>
            <person name="Zentella R."/>
            <person name="Sui N."/>
            <person name="Barnhill B."/>
            <person name="Hsieh W.P."/>
            <person name="Hu J."/>
            <person name="Shabanowitz J."/>
            <person name="Boyce M."/>
            <person name="Olszewski N.E."/>
            <person name="Zhou P."/>
            <person name="Hunt D.F."/>
            <person name="Sun T.P."/>
        </authorList>
    </citation>
    <scope>O-FUCOSYLATION</scope>
</reference>